<comment type="function">
    <text>Guanine nucleotide exchange factor (GEF) which may activate RAB9A and RAB9B. Promotes the exchange of GDP to GTP, converting inactive GDP-bound Rab proteins into their active GTP-bound form.</text>
</comment>
<comment type="alternative products">
    <event type="alternative splicing"/>
    <isoform>
        <id>Q6P9P8-1</id>
        <name>1</name>
        <sequence type="displayed"/>
    </isoform>
    <isoform>
        <id>Q6P9P8-2</id>
        <name>2</name>
        <sequence type="described" ref="VSP_019469 VSP_019470"/>
    </isoform>
</comment>
<keyword id="KW-0025">Alternative splicing</keyword>
<keyword id="KW-0344">Guanine-nucleotide releasing factor</keyword>
<keyword id="KW-0597">Phosphoprotein</keyword>
<keyword id="KW-1185">Reference proteome</keyword>
<protein>
    <recommendedName>
        <fullName>DENN domain-containing protein 2C</fullName>
    </recommendedName>
</protein>
<organism>
    <name type="scientific">Mus musculus</name>
    <name type="common">Mouse</name>
    <dbReference type="NCBI Taxonomy" id="10090"/>
    <lineage>
        <taxon>Eukaryota</taxon>
        <taxon>Metazoa</taxon>
        <taxon>Chordata</taxon>
        <taxon>Craniata</taxon>
        <taxon>Vertebrata</taxon>
        <taxon>Euteleostomi</taxon>
        <taxon>Mammalia</taxon>
        <taxon>Eutheria</taxon>
        <taxon>Euarchontoglires</taxon>
        <taxon>Glires</taxon>
        <taxon>Rodentia</taxon>
        <taxon>Myomorpha</taxon>
        <taxon>Muroidea</taxon>
        <taxon>Muridae</taxon>
        <taxon>Murinae</taxon>
        <taxon>Mus</taxon>
        <taxon>Mus</taxon>
    </lineage>
</organism>
<reference key="1">
    <citation type="journal article" date="2005" name="Science">
        <title>The transcriptional landscape of the mammalian genome.</title>
        <authorList>
            <person name="Carninci P."/>
            <person name="Kasukawa T."/>
            <person name="Katayama S."/>
            <person name="Gough J."/>
            <person name="Frith M.C."/>
            <person name="Maeda N."/>
            <person name="Oyama R."/>
            <person name="Ravasi T."/>
            <person name="Lenhard B."/>
            <person name="Wells C."/>
            <person name="Kodzius R."/>
            <person name="Shimokawa K."/>
            <person name="Bajic V.B."/>
            <person name="Brenner S.E."/>
            <person name="Batalov S."/>
            <person name="Forrest A.R."/>
            <person name="Zavolan M."/>
            <person name="Davis M.J."/>
            <person name="Wilming L.G."/>
            <person name="Aidinis V."/>
            <person name="Allen J.E."/>
            <person name="Ambesi-Impiombato A."/>
            <person name="Apweiler R."/>
            <person name="Aturaliya R.N."/>
            <person name="Bailey T.L."/>
            <person name="Bansal M."/>
            <person name="Baxter L."/>
            <person name="Beisel K.W."/>
            <person name="Bersano T."/>
            <person name="Bono H."/>
            <person name="Chalk A.M."/>
            <person name="Chiu K.P."/>
            <person name="Choudhary V."/>
            <person name="Christoffels A."/>
            <person name="Clutterbuck D.R."/>
            <person name="Crowe M.L."/>
            <person name="Dalla E."/>
            <person name="Dalrymple B.P."/>
            <person name="de Bono B."/>
            <person name="Della Gatta G."/>
            <person name="di Bernardo D."/>
            <person name="Down T."/>
            <person name="Engstrom P."/>
            <person name="Fagiolini M."/>
            <person name="Faulkner G."/>
            <person name="Fletcher C.F."/>
            <person name="Fukushima T."/>
            <person name="Furuno M."/>
            <person name="Futaki S."/>
            <person name="Gariboldi M."/>
            <person name="Georgii-Hemming P."/>
            <person name="Gingeras T.R."/>
            <person name="Gojobori T."/>
            <person name="Green R.E."/>
            <person name="Gustincich S."/>
            <person name="Harbers M."/>
            <person name="Hayashi Y."/>
            <person name="Hensch T.K."/>
            <person name="Hirokawa N."/>
            <person name="Hill D."/>
            <person name="Huminiecki L."/>
            <person name="Iacono M."/>
            <person name="Ikeo K."/>
            <person name="Iwama A."/>
            <person name="Ishikawa T."/>
            <person name="Jakt M."/>
            <person name="Kanapin A."/>
            <person name="Katoh M."/>
            <person name="Kawasawa Y."/>
            <person name="Kelso J."/>
            <person name="Kitamura H."/>
            <person name="Kitano H."/>
            <person name="Kollias G."/>
            <person name="Krishnan S.P."/>
            <person name="Kruger A."/>
            <person name="Kummerfeld S.K."/>
            <person name="Kurochkin I.V."/>
            <person name="Lareau L.F."/>
            <person name="Lazarevic D."/>
            <person name="Lipovich L."/>
            <person name="Liu J."/>
            <person name="Liuni S."/>
            <person name="McWilliam S."/>
            <person name="Madan Babu M."/>
            <person name="Madera M."/>
            <person name="Marchionni L."/>
            <person name="Matsuda H."/>
            <person name="Matsuzawa S."/>
            <person name="Miki H."/>
            <person name="Mignone F."/>
            <person name="Miyake S."/>
            <person name="Morris K."/>
            <person name="Mottagui-Tabar S."/>
            <person name="Mulder N."/>
            <person name="Nakano N."/>
            <person name="Nakauchi H."/>
            <person name="Ng P."/>
            <person name="Nilsson R."/>
            <person name="Nishiguchi S."/>
            <person name="Nishikawa S."/>
            <person name="Nori F."/>
            <person name="Ohara O."/>
            <person name="Okazaki Y."/>
            <person name="Orlando V."/>
            <person name="Pang K.C."/>
            <person name="Pavan W.J."/>
            <person name="Pavesi G."/>
            <person name="Pesole G."/>
            <person name="Petrovsky N."/>
            <person name="Piazza S."/>
            <person name="Reed J."/>
            <person name="Reid J.F."/>
            <person name="Ring B.Z."/>
            <person name="Ringwald M."/>
            <person name="Rost B."/>
            <person name="Ruan Y."/>
            <person name="Salzberg S.L."/>
            <person name="Sandelin A."/>
            <person name="Schneider C."/>
            <person name="Schoenbach C."/>
            <person name="Sekiguchi K."/>
            <person name="Semple C.A."/>
            <person name="Seno S."/>
            <person name="Sessa L."/>
            <person name="Sheng Y."/>
            <person name="Shibata Y."/>
            <person name="Shimada H."/>
            <person name="Shimada K."/>
            <person name="Silva D."/>
            <person name="Sinclair B."/>
            <person name="Sperling S."/>
            <person name="Stupka E."/>
            <person name="Sugiura K."/>
            <person name="Sultana R."/>
            <person name="Takenaka Y."/>
            <person name="Taki K."/>
            <person name="Tammoja K."/>
            <person name="Tan S.L."/>
            <person name="Tang S."/>
            <person name="Taylor M.S."/>
            <person name="Tegner J."/>
            <person name="Teichmann S.A."/>
            <person name="Ueda H.R."/>
            <person name="van Nimwegen E."/>
            <person name="Verardo R."/>
            <person name="Wei C.L."/>
            <person name="Yagi K."/>
            <person name="Yamanishi H."/>
            <person name="Zabarovsky E."/>
            <person name="Zhu S."/>
            <person name="Zimmer A."/>
            <person name="Hide W."/>
            <person name="Bult C."/>
            <person name="Grimmond S.M."/>
            <person name="Teasdale R.D."/>
            <person name="Liu E.T."/>
            <person name="Brusic V."/>
            <person name="Quackenbush J."/>
            <person name="Wahlestedt C."/>
            <person name="Mattick J.S."/>
            <person name="Hume D.A."/>
            <person name="Kai C."/>
            <person name="Sasaki D."/>
            <person name="Tomaru Y."/>
            <person name="Fukuda S."/>
            <person name="Kanamori-Katayama M."/>
            <person name="Suzuki M."/>
            <person name="Aoki J."/>
            <person name="Arakawa T."/>
            <person name="Iida J."/>
            <person name="Imamura K."/>
            <person name="Itoh M."/>
            <person name="Kato T."/>
            <person name="Kawaji H."/>
            <person name="Kawagashira N."/>
            <person name="Kawashima T."/>
            <person name="Kojima M."/>
            <person name="Kondo S."/>
            <person name="Konno H."/>
            <person name="Nakano K."/>
            <person name="Ninomiya N."/>
            <person name="Nishio T."/>
            <person name="Okada M."/>
            <person name="Plessy C."/>
            <person name="Shibata K."/>
            <person name="Shiraki T."/>
            <person name="Suzuki S."/>
            <person name="Tagami M."/>
            <person name="Waki K."/>
            <person name="Watahiki A."/>
            <person name="Okamura-Oho Y."/>
            <person name="Suzuki H."/>
            <person name="Kawai J."/>
            <person name="Hayashizaki Y."/>
        </authorList>
    </citation>
    <scope>NUCLEOTIDE SEQUENCE [LARGE SCALE MRNA] (ISOFORM 2)</scope>
    <source>
        <strain>C57BL/6J</strain>
        <strain>NOD</strain>
        <tissue>Spleen</tissue>
        <tissue>Vagina</tissue>
    </source>
</reference>
<reference key="2">
    <citation type="journal article" date="2004" name="Genome Res.">
        <title>The status, quality, and expansion of the NIH full-length cDNA project: the Mammalian Gene Collection (MGC).</title>
        <authorList>
            <consortium name="The MGC Project Team"/>
        </authorList>
    </citation>
    <scope>NUCLEOTIDE SEQUENCE [LARGE SCALE MRNA] (ISOFORM 1)</scope>
    <source>
        <strain>C57BL/6J</strain>
        <tissue>Brain</tissue>
        <tissue>Mammary gland</tissue>
    </source>
</reference>
<reference key="3">
    <citation type="journal article" date="2010" name="Cell">
        <title>A tissue-specific atlas of mouse protein phosphorylation and expression.</title>
        <authorList>
            <person name="Huttlin E.L."/>
            <person name="Jedrychowski M.P."/>
            <person name="Elias J.E."/>
            <person name="Goswami T."/>
            <person name="Rad R."/>
            <person name="Beausoleil S.A."/>
            <person name="Villen J."/>
            <person name="Haas W."/>
            <person name="Sowa M.E."/>
            <person name="Gygi S.P."/>
        </authorList>
    </citation>
    <scope>PHOSPHORYLATION [LARGE SCALE ANALYSIS] AT SER-261</scope>
    <scope>IDENTIFICATION BY MASS SPECTROMETRY [LARGE SCALE ANALYSIS]</scope>
    <source>
        <tissue>Spleen</tissue>
    </source>
</reference>
<dbReference type="EMBL" id="AK137637">
    <property type="protein sequence ID" value="BAE23443.1"/>
    <property type="molecule type" value="mRNA"/>
</dbReference>
<dbReference type="EMBL" id="AK172232">
    <property type="protein sequence ID" value="BAE42898.1"/>
    <property type="molecule type" value="mRNA"/>
</dbReference>
<dbReference type="EMBL" id="BC046440">
    <property type="protein sequence ID" value="AAH46440.1"/>
    <property type="molecule type" value="mRNA"/>
</dbReference>
<dbReference type="EMBL" id="BC060666">
    <property type="protein sequence ID" value="AAH60666.1"/>
    <property type="molecule type" value="mRNA"/>
</dbReference>
<dbReference type="SMR" id="Q6P9P8"/>
<dbReference type="FunCoup" id="Q6P9P8">
    <property type="interactions" value="767"/>
</dbReference>
<dbReference type="STRING" id="10090.ENSMUSP00000127187"/>
<dbReference type="iPTMnet" id="Q6P9P8"/>
<dbReference type="PhosphoSitePlus" id="Q6P9P8"/>
<dbReference type="PaxDb" id="10090-ENSMUSP00000127187"/>
<dbReference type="ProteomicsDB" id="279617">
    <molecule id="Q6P9P8-1"/>
</dbReference>
<dbReference type="ProteomicsDB" id="279618">
    <molecule id="Q6P9P8-2"/>
</dbReference>
<dbReference type="UCSC" id="uc008qsr.1">
    <molecule id="Q6P9P8-1"/>
    <property type="organism name" value="mouse"/>
</dbReference>
<dbReference type="AGR" id="MGI:3036254"/>
<dbReference type="MGI" id="MGI:3036254">
    <property type="gene designation" value="Dennd2c"/>
</dbReference>
<dbReference type="eggNOG" id="KOG3569">
    <property type="taxonomic scope" value="Eukaryota"/>
</dbReference>
<dbReference type="InParanoid" id="Q6P9P8"/>
<dbReference type="PhylomeDB" id="Q6P9P8"/>
<dbReference type="Reactome" id="R-MMU-8876198">
    <property type="pathway name" value="RAB GEFs exchange GTP for GDP on RABs"/>
</dbReference>
<dbReference type="BioGRID-ORCS" id="329727">
    <property type="hits" value="4 hits in 77 CRISPR screens"/>
</dbReference>
<dbReference type="ChiTaRS" id="Dennd2c">
    <property type="organism name" value="mouse"/>
</dbReference>
<dbReference type="PRO" id="PR:Q6P9P8"/>
<dbReference type="Proteomes" id="UP000000589">
    <property type="component" value="Unplaced"/>
</dbReference>
<dbReference type="RNAct" id="Q6P9P8">
    <property type="molecule type" value="protein"/>
</dbReference>
<dbReference type="GO" id="GO:0005085">
    <property type="term" value="F:guanyl-nucleotide exchange factor activity"/>
    <property type="evidence" value="ECO:0000250"/>
    <property type="project" value="UniProtKB"/>
</dbReference>
<dbReference type="FunFam" id="3.30.450.200:FF:000001">
    <property type="entry name" value="DENN domain-containing protein 2A isoform X1"/>
    <property type="match status" value="1"/>
</dbReference>
<dbReference type="FunFam" id="3.40.50.11500:FF:000004">
    <property type="entry name" value="DENN domain-containing protein 2C isoform X1"/>
    <property type="match status" value="1"/>
</dbReference>
<dbReference type="Gene3D" id="3.30.450.200">
    <property type="match status" value="1"/>
</dbReference>
<dbReference type="Gene3D" id="3.40.50.11500">
    <property type="match status" value="1"/>
</dbReference>
<dbReference type="InterPro" id="IPR001194">
    <property type="entry name" value="cDENN_dom"/>
</dbReference>
<dbReference type="InterPro" id="IPR005112">
    <property type="entry name" value="dDENN_dom"/>
</dbReference>
<dbReference type="InterPro" id="IPR043153">
    <property type="entry name" value="DENN_C"/>
</dbReference>
<dbReference type="InterPro" id="IPR051942">
    <property type="entry name" value="DENN_domain_containing_2"/>
</dbReference>
<dbReference type="InterPro" id="IPR037516">
    <property type="entry name" value="Tripartite_DENN"/>
</dbReference>
<dbReference type="InterPro" id="IPR005113">
    <property type="entry name" value="uDENN_dom"/>
</dbReference>
<dbReference type="PANTHER" id="PTHR15288">
    <property type="entry name" value="DENN DOMAIN-CONTAINING PROTEIN 2"/>
    <property type="match status" value="1"/>
</dbReference>
<dbReference type="PANTHER" id="PTHR15288:SF6">
    <property type="entry name" value="DENN DOMAIN-CONTAINING PROTEIN 2C"/>
    <property type="match status" value="1"/>
</dbReference>
<dbReference type="Pfam" id="PF03455">
    <property type="entry name" value="dDENN"/>
    <property type="match status" value="1"/>
</dbReference>
<dbReference type="Pfam" id="PF02141">
    <property type="entry name" value="DENN"/>
    <property type="match status" value="1"/>
</dbReference>
<dbReference type="Pfam" id="PF03456">
    <property type="entry name" value="uDENN"/>
    <property type="match status" value="1"/>
</dbReference>
<dbReference type="SMART" id="SM00801">
    <property type="entry name" value="dDENN"/>
    <property type="match status" value="1"/>
</dbReference>
<dbReference type="SMART" id="SM00799">
    <property type="entry name" value="DENN"/>
    <property type="match status" value="1"/>
</dbReference>
<dbReference type="SMART" id="SM00800">
    <property type="entry name" value="uDENN"/>
    <property type="match status" value="1"/>
</dbReference>
<dbReference type="PROSITE" id="PS50211">
    <property type="entry name" value="DENN"/>
    <property type="match status" value="1"/>
</dbReference>
<name>DEN2C_MOUSE</name>
<accession>Q6P9P8</accession>
<accession>Q3T9X2</accession>
<accession>Q3UV30</accession>
<accession>Q80V46</accession>
<evidence type="ECO:0000255" key="1">
    <source>
        <dbReference type="PROSITE-ProRule" id="PRU00304"/>
    </source>
</evidence>
<evidence type="ECO:0000256" key="2">
    <source>
        <dbReference type="SAM" id="MobiDB-lite"/>
    </source>
</evidence>
<evidence type="ECO:0000303" key="3">
    <source>
    </source>
</evidence>
<evidence type="ECO:0000305" key="4"/>
<evidence type="ECO:0007744" key="5">
    <source>
    </source>
</evidence>
<sequence>MDVGFTRSAVQTLSRSHCKNIKQKISQWEGRANGVTKTAKFHPKDFGVRYNCHQESPPHKRPTGEERNGALPRNTDVKSRDQSEDEGEGGECRGSHPSEAGLDSSLVCARVKQIEGCQAVAVGPEASLPPGNFYTSQIPWRSIDGLSPDKPLNLALAPCNSTGREPDLSVLDSSYGITKSLENIYYEPEGQECGPSINPLPKPRRTFRYLSESDGIPYKERNCDQKYCESISCVDPSLASSQDPEPKKYGGKIRGRSKRKSFEFEDIQHFRNSRKIHEELGRNAGSALYYTQSEDNIYEDIIYPAKENPYEDIPVQSFPVWRSPSAWRLPPAKSAFRTPKLPPKPQFFQRKTMELKNSQAYFRSKITKDTTLPVTLTEWKLFRAGEVANKKKRNLPPLVLKINDTFESKRGKKRVKLQPYTGKEAPSSKGETSGNESDAEYLPKNRHKRLAQLQPSSKRNPHYQTLERDLIELQEQQLFELFVVVSLQKKPAGYTPQVIQQFPSKGDHGYKQSKDTEERLKVIPRFCFPDSEDSAPTLELKSETFSFVLTGEDGSRWFGYCKKLLPEGRGKRLPEVYCMVSRLGCFNLFSKILDEVEKRREMSPALVYPFMRSVMEAPFPAPGRTITVKSYLPGAGDESIELCRPLDSRLEHVDFECLFKCLSVRHLIRVCASLLLERRVIFVANSLSTLSKCGHAVVATLYPFTWQHTYIPVLPVSMIDIVCSPTPFFIGILSCSLPHLQDLPIEEVLIVDLCADRFLQEVSDEDEILPPKLQAALVQILEDRDEVLAQEQQFSQEVTLSSLVSEAFVRFFVELVGHYSLNMTVTERGERVFQREPFRKSHTSRSVRHFLDLFMETQMFAGFVQDRELRQSGVKGLFEVRALQYLETIPESEPSGVNRILRSLGSKMKFLHKK</sequence>
<gene>
    <name type="primary">Dennd2c</name>
</gene>
<proteinExistence type="evidence at protein level"/>
<feature type="chain" id="PRO_0000242685" description="DENN domain-containing protein 2C">
    <location>
        <begin position="1"/>
        <end position="914"/>
    </location>
</feature>
<feature type="domain" description="uDENN" evidence="1">
    <location>
        <begin position="480"/>
        <end position="627"/>
    </location>
</feature>
<feature type="domain" description="cDENN" evidence="1">
    <location>
        <begin position="649"/>
        <end position="782"/>
    </location>
</feature>
<feature type="domain" description="dDENN" evidence="1">
    <location>
        <begin position="784"/>
        <end position="874"/>
    </location>
</feature>
<feature type="region of interest" description="Disordered" evidence="2">
    <location>
        <begin position="46"/>
        <end position="98"/>
    </location>
</feature>
<feature type="region of interest" description="Disordered" evidence="2">
    <location>
        <begin position="411"/>
        <end position="446"/>
    </location>
</feature>
<feature type="compositionally biased region" description="Basic and acidic residues" evidence="2">
    <location>
        <begin position="56"/>
        <end position="68"/>
    </location>
</feature>
<feature type="modified residue" description="Phosphoserine" evidence="5">
    <location>
        <position position="261"/>
    </location>
</feature>
<feature type="splice variant" id="VSP_019469" description="In isoform 2." evidence="3">
    <location>
        <begin position="1"/>
        <end position="436"/>
    </location>
</feature>
<feature type="splice variant" id="VSP_019470" description="In isoform 2." evidence="3">
    <original>SDAEYLPK</original>
    <variation>MPSTCHRV</variation>
    <location>
        <begin position="437"/>
        <end position="444"/>
    </location>
</feature>
<feature type="sequence conflict" description="In Ref. 1; BAE23443." evidence="4" ref="1">
    <original>H</original>
    <variation>R</variation>
    <location>
        <position position="695"/>
    </location>
</feature>